<reference key="1">
    <citation type="journal article" date="2009" name="J. Bacteriol.">
        <title>Complete and draft genome sequences of six members of the Aquificales.</title>
        <authorList>
            <person name="Reysenbach A.-L."/>
            <person name="Hamamura N."/>
            <person name="Podar M."/>
            <person name="Griffiths E."/>
            <person name="Ferreira S."/>
            <person name="Hochstein R."/>
            <person name="Heidelberg J."/>
            <person name="Johnson J."/>
            <person name="Mead D."/>
            <person name="Pohorille A."/>
            <person name="Sarmiento M."/>
            <person name="Schweighofer K."/>
            <person name="Seshadri R."/>
            <person name="Voytek M.A."/>
        </authorList>
    </citation>
    <scope>NUCLEOTIDE SEQUENCE [LARGE SCALE GENOMIC DNA]</scope>
    <source>
        <strain>DSM 14350 / EX-H1</strain>
    </source>
</reference>
<gene>
    <name evidence="1" type="primary">proA</name>
    <name type="ordered locus">PERMA_1682</name>
</gene>
<sequence>MDIKFYTEKLAREARESQKFLRRVTTDIKNRVLLRTAELLIEKKEIIKEANDKDLEFAQKKGYSKALLDRLTLNEKRINGMVQVLKDVASLPDPVGEIISMWTRPNGLRVGQMRVPLGTVMIIYEARPNVTVEAASLCIKSSNAVILKGGSETINSNRVLVEILRQAARESGFPERAIQFVDTTDREAVNHLLTLDQYIDVVIPRGGEGLIRAVAEKATMPVIKHYKGVCNLYIDDEADMEKALNIAYNAKVERPSVCNAIENLIVHKDIAEKFLPEIAYYYGKAGVEMRCDERALEILRDHPKANDTEIVPAKEDDYYEEFLDLIIAVKVVDSIDQAIDFIHKYGSNHSESIVTENYTKGMRFINEVDSSAVYINASTRFTDGNEFGLGAEMGISTDKIHVRGPMGLKELTIPKFIIFGDGQIRNNVGIPEDEEIKIDTEKCEM</sequence>
<evidence type="ECO:0000255" key="1">
    <source>
        <dbReference type="HAMAP-Rule" id="MF_00412"/>
    </source>
</evidence>
<organism>
    <name type="scientific">Persephonella marina (strain DSM 14350 / EX-H1)</name>
    <dbReference type="NCBI Taxonomy" id="123214"/>
    <lineage>
        <taxon>Bacteria</taxon>
        <taxon>Pseudomonadati</taxon>
        <taxon>Aquificota</taxon>
        <taxon>Aquificia</taxon>
        <taxon>Aquificales</taxon>
        <taxon>Hydrogenothermaceae</taxon>
        <taxon>Persephonella</taxon>
    </lineage>
</organism>
<proteinExistence type="inferred from homology"/>
<accession>C0QS00</accession>
<dbReference type="EC" id="1.2.1.41" evidence="1"/>
<dbReference type="EMBL" id="CP001230">
    <property type="protein sequence ID" value="ACO04323.1"/>
    <property type="molecule type" value="Genomic_DNA"/>
</dbReference>
<dbReference type="RefSeq" id="WP_012676561.1">
    <property type="nucleotide sequence ID" value="NC_012440.1"/>
</dbReference>
<dbReference type="SMR" id="C0QS00"/>
<dbReference type="STRING" id="123214.PERMA_1682"/>
<dbReference type="PaxDb" id="123214-PERMA_1682"/>
<dbReference type="KEGG" id="pmx:PERMA_1682"/>
<dbReference type="eggNOG" id="COG0014">
    <property type="taxonomic scope" value="Bacteria"/>
</dbReference>
<dbReference type="HOGENOM" id="CLU_030231_0_0_0"/>
<dbReference type="OrthoDB" id="9809970at2"/>
<dbReference type="UniPathway" id="UPA00098">
    <property type="reaction ID" value="UER00360"/>
</dbReference>
<dbReference type="Proteomes" id="UP000001366">
    <property type="component" value="Chromosome"/>
</dbReference>
<dbReference type="GO" id="GO:0005737">
    <property type="term" value="C:cytoplasm"/>
    <property type="evidence" value="ECO:0007669"/>
    <property type="project" value="UniProtKB-SubCell"/>
</dbReference>
<dbReference type="GO" id="GO:0004350">
    <property type="term" value="F:glutamate-5-semialdehyde dehydrogenase activity"/>
    <property type="evidence" value="ECO:0007669"/>
    <property type="project" value="UniProtKB-UniRule"/>
</dbReference>
<dbReference type="GO" id="GO:0050661">
    <property type="term" value="F:NADP binding"/>
    <property type="evidence" value="ECO:0007669"/>
    <property type="project" value="InterPro"/>
</dbReference>
<dbReference type="GO" id="GO:0055129">
    <property type="term" value="P:L-proline biosynthetic process"/>
    <property type="evidence" value="ECO:0007669"/>
    <property type="project" value="UniProtKB-UniRule"/>
</dbReference>
<dbReference type="CDD" id="cd07079">
    <property type="entry name" value="ALDH_F18-19_ProA-GPR"/>
    <property type="match status" value="1"/>
</dbReference>
<dbReference type="FunFam" id="3.40.309.10:FF:000006">
    <property type="entry name" value="Gamma-glutamyl phosphate reductase"/>
    <property type="match status" value="1"/>
</dbReference>
<dbReference type="Gene3D" id="3.40.605.10">
    <property type="entry name" value="Aldehyde Dehydrogenase, Chain A, domain 1"/>
    <property type="match status" value="1"/>
</dbReference>
<dbReference type="Gene3D" id="3.40.309.10">
    <property type="entry name" value="Aldehyde Dehydrogenase, Chain A, domain 2"/>
    <property type="match status" value="1"/>
</dbReference>
<dbReference type="HAMAP" id="MF_00412">
    <property type="entry name" value="ProA"/>
    <property type="match status" value="1"/>
</dbReference>
<dbReference type="InterPro" id="IPR016161">
    <property type="entry name" value="Ald_DH/histidinol_DH"/>
</dbReference>
<dbReference type="InterPro" id="IPR016163">
    <property type="entry name" value="Ald_DH_C"/>
</dbReference>
<dbReference type="InterPro" id="IPR016162">
    <property type="entry name" value="Ald_DH_N"/>
</dbReference>
<dbReference type="InterPro" id="IPR015590">
    <property type="entry name" value="Aldehyde_DH_dom"/>
</dbReference>
<dbReference type="InterPro" id="IPR020593">
    <property type="entry name" value="G-glutamylP_reductase_CS"/>
</dbReference>
<dbReference type="InterPro" id="IPR012134">
    <property type="entry name" value="Glu-5-SA_DH"/>
</dbReference>
<dbReference type="InterPro" id="IPR000965">
    <property type="entry name" value="GPR_dom"/>
</dbReference>
<dbReference type="NCBIfam" id="NF001221">
    <property type="entry name" value="PRK00197.1"/>
    <property type="match status" value="1"/>
</dbReference>
<dbReference type="NCBIfam" id="TIGR00407">
    <property type="entry name" value="proA"/>
    <property type="match status" value="1"/>
</dbReference>
<dbReference type="PANTHER" id="PTHR11063:SF8">
    <property type="entry name" value="DELTA-1-PYRROLINE-5-CARBOXYLATE SYNTHASE"/>
    <property type="match status" value="1"/>
</dbReference>
<dbReference type="PANTHER" id="PTHR11063">
    <property type="entry name" value="GLUTAMATE SEMIALDEHYDE DEHYDROGENASE"/>
    <property type="match status" value="1"/>
</dbReference>
<dbReference type="Pfam" id="PF00171">
    <property type="entry name" value="Aldedh"/>
    <property type="match status" value="1"/>
</dbReference>
<dbReference type="PIRSF" id="PIRSF000151">
    <property type="entry name" value="GPR"/>
    <property type="match status" value="1"/>
</dbReference>
<dbReference type="SUPFAM" id="SSF53720">
    <property type="entry name" value="ALDH-like"/>
    <property type="match status" value="1"/>
</dbReference>
<dbReference type="PROSITE" id="PS01223">
    <property type="entry name" value="PROA"/>
    <property type="match status" value="1"/>
</dbReference>
<protein>
    <recommendedName>
        <fullName evidence="1">Gamma-glutamyl phosphate reductase</fullName>
        <shortName evidence="1">GPR</shortName>
        <ecNumber evidence="1">1.2.1.41</ecNumber>
    </recommendedName>
    <alternativeName>
        <fullName evidence="1">Glutamate-5-semialdehyde dehydrogenase</fullName>
    </alternativeName>
    <alternativeName>
        <fullName evidence="1">Glutamyl-gamma-semialdehyde dehydrogenase</fullName>
        <shortName evidence="1">GSA dehydrogenase</shortName>
    </alternativeName>
</protein>
<keyword id="KW-0028">Amino-acid biosynthesis</keyword>
<keyword id="KW-0963">Cytoplasm</keyword>
<keyword id="KW-0521">NADP</keyword>
<keyword id="KW-0560">Oxidoreductase</keyword>
<keyword id="KW-0641">Proline biosynthesis</keyword>
<keyword id="KW-1185">Reference proteome</keyword>
<feature type="chain" id="PRO_1000193635" description="Gamma-glutamyl phosphate reductase">
    <location>
        <begin position="1"/>
        <end position="445"/>
    </location>
</feature>
<comment type="function">
    <text evidence="1">Catalyzes the NADPH-dependent reduction of L-glutamate 5-phosphate into L-glutamate 5-semialdehyde and phosphate. The product spontaneously undergoes cyclization to form 1-pyrroline-5-carboxylate.</text>
</comment>
<comment type="catalytic activity">
    <reaction evidence="1">
        <text>L-glutamate 5-semialdehyde + phosphate + NADP(+) = L-glutamyl 5-phosphate + NADPH + H(+)</text>
        <dbReference type="Rhea" id="RHEA:19541"/>
        <dbReference type="ChEBI" id="CHEBI:15378"/>
        <dbReference type="ChEBI" id="CHEBI:43474"/>
        <dbReference type="ChEBI" id="CHEBI:57783"/>
        <dbReference type="ChEBI" id="CHEBI:58066"/>
        <dbReference type="ChEBI" id="CHEBI:58274"/>
        <dbReference type="ChEBI" id="CHEBI:58349"/>
        <dbReference type="EC" id="1.2.1.41"/>
    </reaction>
</comment>
<comment type="pathway">
    <text evidence="1">Amino-acid biosynthesis; L-proline biosynthesis; L-glutamate 5-semialdehyde from L-glutamate: step 2/2.</text>
</comment>
<comment type="subcellular location">
    <subcellularLocation>
        <location evidence="1">Cytoplasm</location>
    </subcellularLocation>
</comment>
<comment type="similarity">
    <text evidence="1">Belongs to the gamma-glutamyl phosphate reductase family.</text>
</comment>
<name>PROA_PERMH</name>